<gene>
    <name type="primary">PRAM1</name>
</gene>
<sequence length="670" mass="73969">MAHHLPAAMESHQDFRSIKAKFQASQPEPSDLPKKPPKPEFGKLKKFSQPELSEHPKKAPLPEFGAVSLKPPPPEVTDLPKKPPPPEVTDLPKKPPPPEVTDLPKKPPPPEVTDLPKKPSKLELSDLSKKFPQLGATPFPRKPLQPEVGEAPLKASLPEPGAPARKPLQPDELSHPARPPSEPKSGAFPRKLWQPEAGEATPRSPQPELSTFPKKPAQPEFNVYPKKPPQPQVGGLPKKSVPQPEFSEAAQTPLWKPQSSEPKRDSSAFPKKASQPPLSDFPKKPPQPELGDLTRTSSEPEVSVLPKRPRPAEFKALSKKPPQPELGGLPRTSSEPEFNSLPRKLLQPERRGPPRKFSQPEPSAVLKRHPQPEFFGDLPRKPPLPSSASESSLPAAVAGFSSRHPLSPGFGAAGTPRWRSGGLVHSGGARPGLRPSHPPRRRPLPPASSLGHPPAKPPLPPGPVDMQSFRRPSAASIDLRRTRSAAGLHFQDRQPEDIPQVPDEIYELYDDVEPRDDSSPSPKGRDEAPSVQQAARRPPQDPALRKEKDPQPQQLPPMDPKLLKQLRKAEKAEREFRKKFKFEGEIVVHTKMMIDPNAKTRRGGGKHLGIRRGEILEVIEFTSNEEMLCRDPKGKYGYVPRTALLPLETEVYDDVDFCDPLENQPLPLGR</sequence>
<name>PRAM_HUMAN</name>
<comment type="function">
    <text>May be involved in myeloid differentiation. May be involved in integrin signaling in neutrophils. Binds to PtdIns(4)P.</text>
</comment>
<comment type="subunit">
    <text evidence="4 5 6">Interacts with SKAP2, LCP2 and DBNL. May interact with LYN. Interacts with NEK6.</text>
</comment>
<comment type="interaction">
    <interactant intactId="EBI-2860740">
        <id>Q96QH2</id>
    </interactant>
    <interactant intactId="EBI-743598">
        <id>Q9NYB9</id>
        <label>ABI2</label>
    </interactant>
    <organismsDiffer>false</organismsDiffer>
    <experiments>3</experiments>
</comment>
<comment type="interaction">
    <interactant intactId="EBI-2860740">
        <id>Q96QH2</id>
    </interactant>
    <interactant intactId="EBI-702093">
        <id>P56945</id>
        <label>BCAR1</label>
    </interactant>
    <organismsDiffer>false</organismsDiffer>
    <experiments>3</experiments>
</comment>
<comment type="interaction">
    <interactant intactId="EBI-2860740">
        <id>Q96QH2</id>
    </interactant>
    <interactant intactId="EBI-1049597">
        <id>P27797</id>
        <label>CALR</label>
    </interactant>
    <organismsDiffer>false</organismsDiffer>
    <experiments>3</experiments>
</comment>
<comment type="interaction">
    <interactant intactId="EBI-2860740">
        <id>Q96QH2</id>
    </interactant>
    <interactant intactId="EBI-2808286">
        <id>Q2TAC2</id>
        <label>CCDC57</label>
    </interactant>
    <organismsDiffer>false</organismsDiffer>
    <experiments>3</experiments>
</comment>
<comment type="interaction">
    <interactant intactId="EBI-2860740">
        <id>Q96QH2</id>
    </interactant>
    <interactant intactId="EBI-10961624">
        <id>Q2TAC2-2</id>
        <label>CCDC57</label>
    </interactant>
    <organismsDiffer>false</organismsDiffer>
    <experiments>3</experiments>
</comment>
<comment type="interaction">
    <interactant intactId="EBI-2860740">
        <id>Q96QH2</id>
    </interactant>
    <interactant intactId="EBI-727477">
        <id>P12830</id>
        <label>CDH1</label>
    </interactant>
    <organismsDiffer>false</organismsDiffer>
    <experiments>3</experiments>
</comment>
<comment type="interaction">
    <interactant intactId="EBI-2860740">
        <id>Q96QH2</id>
    </interactant>
    <interactant intactId="EBI-746189">
        <id>Q15078</id>
        <label>CDK5R1</label>
    </interactant>
    <organismsDiffer>false</organismsDiffer>
    <experiments>3</experiments>
</comment>
<comment type="interaction">
    <interactant intactId="EBI-2860740">
        <id>Q96QH2</id>
    </interactant>
    <interactant intactId="EBI-6875961">
        <id>P02489</id>
        <label>CRYAA</label>
    </interactant>
    <organismsDiffer>false</organismsDiffer>
    <experiments>3</experiments>
</comment>
<comment type="interaction">
    <interactant intactId="EBI-2860740">
        <id>Q96QH2</id>
    </interactant>
    <interactant intactId="EBI-351007">
        <id>P36957</id>
        <label>DLST</label>
    </interactant>
    <organismsDiffer>false</organismsDiffer>
    <experiments>3</experiments>
</comment>
<comment type="interaction">
    <interactant intactId="EBI-2860740">
        <id>Q96QH2</id>
    </interactant>
    <interactant intactId="EBI-356015">
        <id>Q14204</id>
        <label>DYNC1H1</label>
    </interactant>
    <organismsDiffer>false</organismsDiffer>
    <experiments>3</experiments>
</comment>
<comment type="interaction">
    <interactant intactId="EBI-2860740">
        <id>Q96QH2</id>
    </interactant>
    <interactant intactId="EBI-11022345">
        <id>P51114-2</id>
        <label>FXR1</label>
    </interactant>
    <organismsDiffer>false</organismsDiffer>
    <experiments>3</experiments>
</comment>
<comment type="interaction">
    <interactant intactId="EBI-2860740">
        <id>Q96QH2</id>
    </interactant>
    <interactant intactId="EBI-740459">
        <id>P51116</id>
        <label>FXR2</label>
    </interactant>
    <organismsDiffer>false</organismsDiffer>
    <experiments>7</experiments>
</comment>
<comment type="interaction">
    <interactant intactId="EBI-2860740">
        <id>Q96QH2</id>
    </interactant>
    <interactant intactId="EBI-618309">
        <id>Q08379</id>
        <label>GOLGA2</label>
    </interactant>
    <organismsDiffer>false</organismsDiffer>
    <experiments>3</experiments>
</comment>
<comment type="interaction">
    <interactant intactId="EBI-2860740">
        <id>Q96QH2</id>
    </interactant>
    <interactant intactId="EBI-2432309">
        <id>Q92876</id>
        <label>KLK6</label>
    </interactant>
    <organismsDiffer>false</organismsDiffer>
    <experiments>3</experiments>
</comment>
<comment type="interaction">
    <interactant intactId="EBI-2860740">
        <id>Q96QH2</id>
    </interactant>
    <interactant intactId="EBI-10171697">
        <id>Q6A162</id>
        <label>KRT40</label>
    </interactant>
    <organismsDiffer>false</organismsDiffer>
    <experiments>3</experiments>
</comment>
<comment type="interaction">
    <interactant intactId="EBI-2860740">
        <id>Q96QH2</id>
    </interactant>
    <interactant intactId="EBI-11746523">
        <id>Q14511-2</id>
        <label>NEDD9</label>
    </interactant>
    <organismsDiffer>false</organismsDiffer>
    <experiments>4</experiments>
</comment>
<comment type="interaction">
    <interactant intactId="EBI-2860740">
        <id>Q96QH2</id>
    </interactant>
    <interactant intactId="EBI-1055945">
        <id>Q8TDX7</id>
        <label>NEK7</label>
    </interactant>
    <organismsDiffer>false</organismsDiffer>
    <experiments>3</experiments>
</comment>
<comment type="interaction">
    <interactant intactId="EBI-2860740">
        <id>Q96QH2</id>
    </interactant>
    <interactant intactId="EBI-724829">
        <id>Q9H0A6</id>
        <label>RNF32</label>
    </interactant>
    <organismsDiffer>false</organismsDiffer>
    <experiments>2</experiments>
</comment>
<comment type="interaction">
    <interactant intactId="EBI-2860740">
        <id>Q96QH2</id>
    </interactant>
    <interactant intactId="EBI-2477305">
        <id>Q86WV1</id>
        <label>SKAP1</label>
    </interactant>
    <organismsDiffer>false</organismsDiffer>
    <experiments>4</experiments>
</comment>
<comment type="interaction">
    <interactant intactId="EBI-2860740">
        <id>Q96QH2</id>
    </interactant>
    <interactant intactId="EBI-11995314">
        <id>Q86WV1-2</id>
        <label>SKAP1</label>
    </interactant>
    <organismsDiffer>false</organismsDiffer>
    <experiments>3</experiments>
</comment>
<comment type="interaction">
    <interactant intactId="EBI-2860740">
        <id>Q96QH2</id>
    </interactant>
    <interactant intactId="EBI-11952721">
        <id>Q05BL1</id>
        <label>TP53BP2</label>
    </interactant>
    <organismsDiffer>false</organismsDiffer>
    <experiments>3</experiments>
</comment>
<comment type="interaction">
    <interactant intactId="EBI-2860740">
        <id>Q96QH2</id>
    </interactant>
    <interactant intactId="EBI-719493">
        <id>P14373</id>
        <label>TRIM27</label>
    </interactant>
    <organismsDiffer>false</organismsDiffer>
    <experiments>3</experiments>
</comment>
<comment type="tissue specificity">
    <text evidence="4">Expressed in peripheral blood leukocytes and bone marrow. Expressed in monocytes, and to a lesser extent in granulocytes and lymphocytes. Not expressed in non hematopoietic tissues except in lung.</text>
</comment>
<comment type="induction">
    <text evidence="4 5">Down-regulated by the PML-RARA oncogene, a fusion protein expressed in a vast majority of acute promyelocytic leukemia. Up-regulated by retinoic acid or arsenic trioxide in cells expressing PML-RARA.</text>
</comment>
<comment type="domain">
    <text>The SH3 domain binds to PtdIns(4)P.</text>
</comment>
<comment type="PTM">
    <text evidence="4">May be phosphorylated on tyrosines.</text>
</comment>
<comment type="polymorphism">
    <text evidence="4">Some transcripts displayed additional 12 amino acid repeats of K-P-P-[PQ]-P-[EQ]-[VAF]-T-D-L-P-K (PubMed:11301322). We cannot rule out that they may represent genetic variants.</text>
</comment>
<reference key="1">
    <citation type="journal article" date="2001" name="J. Biol. Chem.">
        <title>PRAM-1 is a novel adaptor protein regulated by retinoic acid (RA) and promyelocytic leukemia (PML)-RA receptor alpha in acute promyelocytic leukemia cells.</title>
        <authorList>
            <person name="Moog-Lutz C."/>
            <person name="Peterson E.J."/>
            <person name="Lutz P.G."/>
            <person name="Eliason S."/>
            <person name="Cave-Riant F."/>
            <person name="Singer A."/>
            <person name="Di Gioia Y."/>
            <person name="Dmovski S."/>
            <person name="Kamens J."/>
            <person name="Cayre Y.E."/>
            <person name="Koretzky G."/>
        </authorList>
    </citation>
    <scope>NUCLEOTIDE SEQUENCE [MRNA]</scope>
    <scope>INDUCTION</scope>
    <scope>TISSUE SPECIFICITY</scope>
    <scope>PHOSPHORYLATION</scope>
    <scope>INTERACTION WITH SKAP2; LCP2 AND LYN</scope>
    <scope>VARIANT GLN-57</scope>
</reference>
<reference key="2">
    <citation type="journal article" date="2004" name="Nature">
        <title>The DNA sequence and biology of human chromosome 19.</title>
        <authorList>
            <person name="Grimwood J."/>
            <person name="Gordon L.A."/>
            <person name="Olsen A.S."/>
            <person name="Terry A."/>
            <person name="Schmutz J."/>
            <person name="Lamerdin J.E."/>
            <person name="Hellsten U."/>
            <person name="Goodstein D."/>
            <person name="Couronne O."/>
            <person name="Tran-Gyamfi M."/>
            <person name="Aerts A."/>
            <person name="Altherr M."/>
            <person name="Ashworth L."/>
            <person name="Bajorek E."/>
            <person name="Black S."/>
            <person name="Branscomb E."/>
            <person name="Caenepeel S."/>
            <person name="Carrano A.V."/>
            <person name="Caoile C."/>
            <person name="Chan Y.M."/>
            <person name="Christensen M."/>
            <person name="Cleland C.A."/>
            <person name="Copeland A."/>
            <person name="Dalin E."/>
            <person name="Dehal P."/>
            <person name="Denys M."/>
            <person name="Detter J.C."/>
            <person name="Escobar J."/>
            <person name="Flowers D."/>
            <person name="Fotopulos D."/>
            <person name="Garcia C."/>
            <person name="Georgescu A.M."/>
            <person name="Glavina T."/>
            <person name="Gomez M."/>
            <person name="Gonzales E."/>
            <person name="Groza M."/>
            <person name="Hammon N."/>
            <person name="Hawkins T."/>
            <person name="Haydu L."/>
            <person name="Ho I."/>
            <person name="Huang W."/>
            <person name="Israni S."/>
            <person name="Jett J."/>
            <person name="Kadner K."/>
            <person name="Kimball H."/>
            <person name="Kobayashi A."/>
            <person name="Larionov V."/>
            <person name="Leem S.-H."/>
            <person name="Lopez F."/>
            <person name="Lou Y."/>
            <person name="Lowry S."/>
            <person name="Malfatti S."/>
            <person name="Martinez D."/>
            <person name="McCready P.M."/>
            <person name="Medina C."/>
            <person name="Morgan J."/>
            <person name="Nelson K."/>
            <person name="Nolan M."/>
            <person name="Ovcharenko I."/>
            <person name="Pitluck S."/>
            <person name="Pollard M."/>
            <person name="Popkie A.P."/>
            <person name="Predki P."/>
            <person name="Quan G."/>
            <person name="Ramirez L."/>
            <person name="Rash S."/>
            <person name="Retterer J."/>
            <person name="Rodriguez A."/>
            <person name="Rogers S."/>
            <person name="Salamov A."/>
            <person name="Salazar A."/>
            <person name="She X."/>
            <person name="Smith D."/>
            <person name="Slezak T."/>
            <person name="Solovyev V."/>
            <person name="Thayer N."/>
            <person name="Tice H."/>
            <person name="Tsai M."/>
            <person name="Ustaszewska A."/>
            <person name="Vo N."/>
            <person name="Wagner M."/>
            <person name="Wheeler J."/>
            <person name="Wu K."/>
            <person name="Xie G."/>
            <person name="Yang J."/>
            <person name="Dubchak I."/>
            <person name="Furey T.S."/>
            <person name="DeJong P."/>
            <person name="Dickson M."/>
            <person name="Gordon D."/>
            <person name="Eichler E.E."/>
            <person name="Pennacchio L.A."/>
            <person name="Richardson P."/>
            <person name="Stubbs L."/>
            <person name="Rokhsar D.S."/>
            <person name="Myers R.M."/>
            <person name="Rubin E.M."/>
            <person name="Lucas S.M."/>
        </authorList>
    </citation>
    <scope>NUCLEOTIDE SEQUENCE [LARGE SCALE GENOMIC DNA]</scope>
</reference>
<reference key="3">
    <citation type="journal article" date="2004" name="Genome Res.">
        <title>The status, quality, and expansion of the NIH full-length cDNA project: the Mammalian Gene Collection (MGC).</title>
        <authorList>
            <consortium name="The MGC Project Team"/>
        </authorList>
    </citation>
    <scope>NUCLEOTIDE SEQUENCE [LARGE SCALE MRNA]</scope>
    <source>
        <tissue>Blood</tissue>
    </source>
</reference>
<reference key="4">
    <citation type="journal article" date="2005" name="J. Biol. Chem.">
        <title>PRAM-1 potentiates arsenic trioxide-induced JNK activation.</title>
        <authorList>
            <person name="Denis F.M."/>
            <person name="Benecke A."/>
            <person name="Di Gioia Y."/>
            <person name="Touw I.P."/>
            <person name="Cayre Y.E."/>
            <person name="Lutz P.G."/>
        </authorList>
    </citation>
    <scope>INTERACTION WITH DBNL</scope>
    <scope>INDUCTION</scope>
</reference>
<reference key="5">
    <citation type="journal article" date="2006" name="J. Mol. Biol.">
        <title>Lipid-binding hSH3 domains in immune cell adapter proteins.</title>
        <authorList>
            <person name="Heuer K."/>
            <person name="Sylvester M."/>
            <person name="Kliche S."/>
            <person name="Pusch R."/>
            <person name="Thiemke K."/>
            <person name="Schraven B."/>
            <person name="Freund C."/>
        </authorList>
    </citation>
    <scope>PHOSPHOINOSITIDE-BINDING</scope>
</reference>
<reference key="6">
    <citation type="journal article" date="2009" name="Science">
        <title>Lysine acetylation targets protein complexes and co-regulates major cellular functions.</title>
        <authorList>
            <person name="Choudhary C."/>
            <person name="Kumar C."/>
            <person name="Gnad F."/>
            <person name="Nielsen M.L."/>
            <person name="Rehman M."/>
            <person name="Walther T.C."/>
            <person name="Olsen J.V."/>
            <person name="Mann M."/>
        </authorList>
    </citation>
    <scope>IDENTIFICATION BY MASS SPECTROMETRY [LARGE SCALE ANALYSIS]</scope>
</reference>
<reference key="7">
    <citation type="journal article" date="2010" name="J. Proteome Res.">
        <title>Characterization of hNek6 interactome reveals an important role for its short N-terminal domain and colocalization with proteins at the centrosome.</title>
        <authorList>
            <person name="Vaz Meirelles G."/>
            <person name="Ferreira Lanza D.C."/>
            <person name="da Silva J.C."/>
            <person name="Santana Bernachi J."/>
            <person name="Paes Leme A.F."/>
            <person name="Kobarg J."/>
        </authorList>
    </citation>
    <scope>INTERACTION WITH NEK6</scope>
</reference>
<reference key="8">
    <citation type="journal article" date="2015" name="Proteomics">
        <title>N-terminome analysis of the human mitochondrial proteome.</title>
        <authorList>
            <person name="Vaca Jacome A.S."/>
            <person name="Rabilloud T."/>
            <person name="Schaeffer-Reiss C."/>
            <person name="Rompais M."/>
            <person name="Ayoub D."/>
            <person name="Lane L."/>
            <person name="Bairoch A."/>
            <person name="Van Dorsselaer A."/>
            <person name="Carapito C."/>
        </authorList>
    </citation>
    <scope>IDENTIFICATION BY MASS SPECTROMETRY [LARGE SCALE ANALYSIS]</scope>
</reference>
<proteinExistence type="evidence at protein level"/>
<feature type="chain" id="PRO_0000270171" description="PML-RARA-regulated adapter molecule 1">
    <location>
        <begin position="1"/>
        <end position="670"/>
    </location>
</feature>
<feature type="repeat" description="1">
    <location>
        <begin position="70"/>
        <end position="81"/>
    </location>
</feature>
<feature type="repeat" description="2">
    <location>
        <begin position="82"/>
        <end position="93"/>
    </location>
</feature>
<feature type="repeat" description="3">
    <location>
        <begin position="94"/>
        <end position="105"/>
    </location>
</feature>
<feature type="repeat" description="4">
    <location>
        <begin position="106"/>
        <end position="117"/>
    </location>
</feature>
<feature type="domain" description="SH3" evidence="2">
    <location>
        <begin position="571"/>
        <end position="649"/>
    </location>
</feature>
<feature type="region of interest" description="Disordered" evidence="3">
    <location>
        <begin position="1"/>
        <end position="561"/>
    </location>
</feature>
<feature type="region of interest" description="4 X 12 AA repeats of K-P-P-[PQ]-P-[EQ]-[VAF]-T-D-L-P-K">
    <location>
        <begin position="70"/>
        <end position="165"/>
    </location>
</feature>
<feature type="compositionally biased region" description="Basic and acidic residues" evidence="3">
    <location>
        <begin position="31"/>
        <end position="43"/>
    </location>
</feature>
<feature type="compositionally biased region" description="Basic and acidic residues" evidence="3">
    <location>
        <begin position="114"/>
        <end position="129"/>
    </location>
</feature>
<feature type="compositionally biased region" description="Low complexity" evidence="3">
    <location>
        <begin position="386"/>
        <end position="398"/>
    </location>
</feature>
<feature type="compositionally biased region" description="Pro residues" evidence="3">
    <location>
        <begin position="454"/>
        <end position="463"/>
    </location>
</feature>
<feature type="compositionally biased region" description="Acidic residues" evidence="3">
    <location>
        <begin position="504"/>
        <end position="514"/>
    </location>
</feature>
<feature type="compositionally biased region" description="Basic and acidic residues" evidence="3">
    <location>
        <begin position="515"/>
        <end position="528"/>
    </location>
</feature>
<feature type="modified residue" description="Phosphoserine" evidence="1">
    <location>
        <position position="340"/>
    </location>
</feature>
<feature type="sequence variant" id="VAR_029808" description="In dbSNP:rs4804305." evidence="4">
    <original>K</original>
    <variation>Q</variation>
    <location>
        <position position="57"/>
    </location>
</feature>
<feature type="sequence variant" id="VAR_029809" description="In dbSNP:rs4239541.">
    <original>P</original>
    <variation>Q</variation>
    <location>
        <position position="73"/>
    </location>
</feature>
<feature type="sequence variant" id="VAR_029810" description="In dbSNP:rs4239540.">
    <original>V</original>
    <variation>F</variation>
    <location>
        <position position="76"/>
    </location>
</feature>
<feature type="sequence variant" id="VAR_061692" description="In dbSNP:rs58466313.">
    <original>G</original>
    <variation>E</variation>
    <location>
        <position position="135"/>
    </location>
</feature>
<feature type="sequence conflict" description="In Ref. 3; AAH28012." evidence="7" ref="3">
    <original>S</original>
    <variation>N</variation>
    <location>
        <position position="11"/>
    </location>
</feature>
<feature type="sequence conflict" description="In Ref. 1; CAC17767." evidence="7" ref="1">
    <original>P</original>
    <variation>PQPQFTDLPKKPPPPEVTDLPKKPPPPEVTDLPKKPPPPEVTDLPKKPP</variation>
    <location>
        <position position="72"/>
    </location>
</feature>
<feature type="sequence conflict" description="In Ref. 1; CAC17767." evidence="7" ref="1">
    <original>V</original>
    <variation>A</variation>
    <location>
        <position position="76"/>
    </location>
</feature>
<dbReference type="EMBL" id="AJ272324">
    <property type="protein sequence ID" value="CAC17767.1"/>
    <property type="molecule type" value="mRNA"/>
</dbReference>
<dbReference type="EMBL" id="AC092298">
    <property type="status" value="NOT_ANNOTATED_CDS"/>
    <property type="molecule type" value="Genomic_DNA"/>
</dbReference>
<dbReference type="EMBL" id="AC136469">
    <property type="status" value="NOT_ANNOTATED_CDS"/>
    <property type="molecule type" value="Genomic_DNA"/>
</dbReference>
<dbReference type="EMBL" id="BC028012">
    <property type="protein sequence ID" value="AAH28012.1"/>
    <property type="molecule type" value="mRNA"/>
</dbReference>
<dbReference type="CCDS" id="CCDS45954.2"/>
<dbReference type="RefSeq" id="NP_115528.4">
    <property type="nucleotide sequence ID" value="NM_032152.4"/>
</dbReference>
<dbReference type="SMR" id="Q96QH2"/>
<dbReference type="BioGRID" id="123894">
    <property type="interactions" value="46"/>
</dbReference>
<dbReference type="FunCoup" id="Q96QH2">
    <property type="interactions" value="18"/>
</dbReference>
<dbReference type="IntAct" id="Q96QH2">
    <property type="interactions" value="28"/>
</dbReference>
<dbReference type="STRING" id="9606.ENSP00000408342"/>
<dbReference type="GlyGen" id="Q96QH2">
    <property type="glycosylation" value="1 site, 1 O-linked glycan (1 site)"/>
</dbReference>
<dbReference type="iPTMnet" id="Q96QH2"/>
<dbReference type="PhosphoSitePlus" id="Q96QH2"/>
<dbReference type="BioMuta" id="PRAM1"/>
<dbReference type="DMDM" id="327478532"/>
<dbReference type="jPOST" id="Q96QH2"/>
<dbReference type="MassIVE" id="Q96QH2"/>
<dbReference type="PaxDb" id="9606-ENSP00000408342"/>
<dbReference type="PeptideAtlas" id="Q96QH2"/>
<dbReference type="Antibodypedia" id="24911">
    <property type="antibodies" value="119 antibodies from 25 providers"/>
</dbReference>
<dbReference type="DNASU" id="84106"/>
<dbReference type="Ensembl" id="ENST00000423345.5">
    <property type="protein sequence ID" value="ENSP00000408342.2"/>
    <property type="gene ID" value="ENSG00000133246.12"/>
</dbReference>
<dbReference type="GeneID" id="84106"/>
<dbReference type="KEGG" id="hsa:84106"/>
<dbReference type="MANE-Select" id="ENST00000423345.5">
    <property type="protein sequence ID" value="ENSP00000408342.2"/>
    <property type="RefSeq nucleotide sequence ID" value="NM_032152.5"/>
    <property type="RefSeq protein sequence ID" value="NP_115528.4"/>
</dbReference>
<dbReference type="UCSC" id="uc002mkd.4">
    <property type="organism name" value="human"/>
</dbReference>
<dbReference type="AGR" id="HGNC:30091"/>
<dbReference type="CTD" id="84106"/>
<dbReference type="DisGeNET" id="84106"/>
<dbReference type="GeneCards" id="PRAM1"/>
<dbReference type="HGNC" id="HGNC:30091">
    <property type="gene designation" value="PRAM1"/>
</dbReference>
<dbReference type="HPA" id="ENSG00000133246">
    <property type="expression patterns" value="Tissue enriched (bone)"/>
</dbReference>
<dbReference type="MalaCards" id="PRAM1"/>
<dbReference type="MIM" id="606466">
    <property type="type" value="gene"/>
</dbReference>
<dbReference type="neXtProt" id="NX_Q96QH2"/>
<dbReference type="OpenTargets" id="ENSG00000133246"/>
<dbReference type="PharmGKB" id="PA142671137"/>
<dbReference type="VEuPathDB" id="HostDB:ENSG00000133246"/>
<dbReference type="eggNOG" id="ENOG502SS22">
    <property type="taxonomic scope" value="Eukaryota"/>
</dbReference>
<dbReference type="GeneTree" id="ENSGT00530000063460"/>
<dbReference type="HOGENOM" id="CLU_460488_0_0_1"/>
<dbReference type="InParanoid" id="Q96QH2"/>
<dbReference type="OMA" id="HTRMMID"/>
<dbReference type="OrthoDB" id="8889279at2759"/>
<dbReference type="PAN-GO" id="Q96QH2">
    <property type="GO annotations" value="4 GO annotations based on evolutionary models"/>
</dbReference>
<dbReference type="PhylomeDB" id="Q96QH2"/>
<dbReference type="PathwayCommons" id="Q96QH2"/>
<dbReference type="SignaLink" id="Q96QH2"/>
<dbReference type="BioGRID-ORCS" id="84106">
    <property type="hits" value="7 hits in 1143 CRISPR screens"/>
</dbReference>
<dbReference type="ChiTaRS" id="PRAM1">
    <property type="organism name" value="human"/>
</dbReference>
<dbReference type="GeneWiki" id="PRAM1"/>
<dbReference type="GenomeRNAi" id="84106"/>
<dbReference type="Pharos" id="Q96QH2">
    <property type="development level" value="Tbio"/>
</dbReference>
<dbReference type="PRO" id="PR:Q96QH2"/>
<dbReference type="Proteomes" id="UP000005640">
    <property type="component" value="Chromosome 19"/>
</dbReference>
<dbReference type="RNAct" id="Q96QH2">
    <property type="molecule type" value="protein"/>
</dbReference>
<dbReference type="Bgee" id="ENSG00000133246">
    <property type="expression patterns" value="Expressed in monocyte and 103 other cell types or tissues"/>
</dbReference>
<dbReference type="ExpressionAtlas" id="Q96QH2">
    <property type="expression patterns" value="baseline and differential"/>
</dbReference>
<dbReference type="GO" id="GO:0005886">
    <property type="term" value="C:plasma membrane"/>
    <property type="evidence" value="ECO:0000318"/>
    <property type="project" value="GO_Central"/>
</dbReference>
<dbReference type="GO" id="GO:0032991">
    <property type="term" value="C:protein-containing complex"/>
    <property type="evidence" value="ECO:0000314"/>
    <property type="project" value="UniProtKB"/>
</dbReference>
<dbReference type="GO" id="GO:0008289">
    <property type="term" value="F:lipid binding"/>
    <property type="evidence" value="ECO:0007669"/>
    <property type="project" value="UniProtKB-KW"/>
</dbReference>
<dbReference type="GO" id="GO:0019901">
    <property type="term" value="F:protein kinase binding"/>
    <property type="evidence" value="ECO:0000353"/>
    <property type="project" value="UniProtKB"/>
</dbReference>
<dbReference type="GO" id="GO:0007229">
    <property type="term" value="P:integrin-mediated signaling pathway"/>
    <property type="evidence" value="ECO:0000318"/>
    <property type="project" value="GO_Central"/>
</dbReference>
<dbReference type="GO" id="GO:0072659">
    <property type="term" value="P:protein localization to plasma membrane"/>
    <property type="evidence" value="ECO:0000318"/>
    <property type="project" value="GO_Central"/>
</dbReference>
<dbReference type="GO" id="GO:0043313">
    <property type="term" value="P:regulation of neutrophil degranulation"/>
    <property type="evidence" value="ECO:0007669"/>
    <property type="project" value="Ensembl"/>
</dbReference>
<dbReference type="GO" id="GO:0050852">
    <property type="term" value="P:T cell receptor signaling pathway"/>
    <property type="evidence" value="ECO:0000318"/>
    <property type="project" value="GO_Central"/>
</dbReference>
<dbReference type="FunFam" id="2.30.30.40:FF:000179">
    <property type="entry name" value="PML-RARA regulated adaptor molecule 1"/>
    <property type="match status" value="1"/>
</dbReference>
<dbReference type="Gene3D" id="2.30.30.40">
    <property type="entry name" value="SH3 Domains"/>
    <property type="match status" value="1"/>
</dbReference>
<dbReference type="InterPro" id="IPR043443">
    <property type="entry name" value="FYB1/2-like"/>
</dbReference>
<dbReference type="InterPro" id="IPR029294">
    <property type="entry name" value="hSH3"/>
</dbReference>
<dbReference type="InterPro" id="IPR036028">
    <property type="entry name" value="SH3-like_dom_sf"/>
</dbReference>
<dbReference type="InterPro" id="IPR001452">
    <property type="entry name" value="SH3_domain"/>
</dbReference>
<dbReference type="PANTHER" id="PTHR16830:SF11">
    <property type="entry name" value="PML-RARA-REGULATED ADAPTER MOLECULE 1"/>
    <property type="match status" value="1"/>
</dbReference>
<dbReference type="PANTHER" id="PTHR16830">
    <property type="entry name" value="SH2 CONTAINING ADAPTOR PRAM-1 RELATED"/>
    <property type="match status" value="1"/>
</dbReference>
<dbReference type="Pfam" id="PF14603">
    <property type="entry name" value="hSH3"/>
    <property type="match status" value="1"/>
</dbReference>
<dbReference type="PRINTS" id="PR01217">
    <property type="entry name" value="PRICHEXTENSN"/>
</dbReference>
<dbReference type="SUPFAM" id="SSF50044">
    <property type="entry name" value="SH3-domain"/>
    <property type="match status" value="1"/>
</dbReference>
<dbReference type="PROSITE" id="PS50002">
    <property type="entry name" value="SH3"/>
    <property type="match status" value="1"/>
</dbReference>
<organism>
    <name type="scientific">Homo sapiens</name>
    <name type="common">Human</name>
    <dbReference type="NCBI Taxonomy" id="9606"/>
    <lineage>
        <taxon>Eukaryota</taxon>
        <taxon>Metazoa</taxon>
        <taxon>Chordata</taxon>
        <taxon>Craniata</taxon>
        <taxon>Vertebrata</taxon>
        <taxon>Euteleostomi</taxon>
        <taxon>Mammalia</taxon>
        <taxon>Eutheria</taxon>
        <taxon>Euarchontoglires</taxon>
        <taxon>Primates</taxon>
        <taxon>Haplorrhini</taxon>
        <taxon>Catarrhini</taxon>
        <taxon>Hominidae</taxon>
        <taxon>Homo</taxon>
    </lineage>
</organism>
<protein>
    <recommendedName>
        <fullName>PML-RARA-regulated adapter molecule 1</fullName>
        <shortName>PRAM</shortName>
        <shortName>PRAM-1</shortName>
    </recommendedName>
</protein>
<accession>Q96QH2</accession>
<accession>Q8N6W7</accession>
<keyword id="KW-0446">Lipid-binding</keyword>
<keyword id="KW-0597">Phosphoprotein</keyword>
<keyword id="KW-1267">Proteomics identification</keyword>
<keyword id="KW-1185">Reference proteome</keyword>
<keyword id="KW-0677">Repeat</keyword>
<keyword id="KW-0728">SH3 domain</keyword>
<evidence type="ECO:0000250" key="1">
    <source>
        <dbReference type="UniProtKB" id="Q6BCL1"/>
    </source>
</evidence>
<evidence type="ECO:0000255" key="2">
    <source>
        <dbReference type="PROSITE-ProRule" id="PRU00192"/>
    </source>
</evidence>
<evidence type="ECO:0000256" key="3">
    <source>
        <dbReference type="SAM" id="MobiDB-lite"/>
    </source>
</evidence>
<evidence type="ECO:0000269" key="4">
    <source>
    </source>
</evidence>
<evidence type="ECO:0000269" key="5">
    <source>
    </source>
</evidence>
<evidence type="ECO:0000269" key="6">
    <source>
    </source>
</evidence>
<evidence type="ECO:0000305" key="7"/>